<organism>
    <name type="scientific">Rhodopseudomonas palustris (strain BisA53)</name>
    <dbReference type="NCBI Taxonomy" id="316055"/>
    <lineage>
        <taxon>Bacteria</taxon>
        <taxon>Pseudomonadati</taxon>
        <taxon>Pseudomonadota</taxon>
        <taxon>Alphaproteobacteria</taxon>
        <taxon>Hyphomicrobiales</taxon>
        <taxon>Nitrobacteraceae</taxon>
        <taxon>Rhodopseudomonas</taxon>
    </lineage>
</organism>
<feature type="chain" id="PRO_1000064615" description="Glucans biosynthesis glucosyltransferase H">
    <location>
        <begin position="1"/>
        <end position="712"/>
    </location>
</feature>
<feature type="transmembrane region" description="Helical" evidence="1">
    <location>
        <begin position="57"/>
        <end position="77"/>
    </location>
</feature>
<feature type="transmembrane region" description="Helical" evidence="1">
    <location>
        <begin position="89"/>
        <end position="109"/>
    </location>
</feature>
<feature type="transmembrane region" description="Helical" evidence="1">
    <location>
        <begin position="408"/>
        <end position="428"/>
    </location>
</feature>
<feature type="transmembrane region" description="Helical" evidence="1">
    <location>
        <begin position="462"/>
        <end position="482"/>
    </location>
</feature>
<feature type="transmembrane region" description="Helical" evidence="1">
    <location>
        <begin position="552"/>
        <end position="572"/>
    </location>
</feature>
<feature type="transmembrane region" description="Helical" evidence="1">
    <location>
        <begin position="573"/>
        <end position="593"/>
    </location>
</feature>
<keyword id="KW-0997">Cell inner membrane</keyword>
<keyword id="KW-1003">Cell membrane</keyword>
<keyword id="KW-0328">Glycosyltransferase</keyword>
<keyword id="KW-0472">Membrane</keyword>
<keyword id="KW-0808">Transferase</keyword>
<keyword id="KW-0812">Transmembrane</keyword>
<keyword id="KW-1133">Transmembrane helix</keyword>
<proteinExistence type="inferred from homology"/>
<reference key="1">
    <citation type="submission" date="2006-09" db="EMBL/GenBank/DDBJ databases">
        <title>Complete sequence of Rhodopseudomonas palustris BisA53.</title>
        <authorList>
            <consortium name="US DOE Joint Genome Institute"/>
            <person name="Copeland A."/>
            <person name="Lucas S."/>
            <person name="Lapidus A."/>
            <person name="Barry K."/>
            <person name="Detter J.C."/>
            <person name="Glavina del Rio T."/>
            <person name="Hammon N."/>
            <person name="Israni S."/>
            <person name="Dalin E."/>
            <person name="Tice H."/>
            <person name="Pitluck S."/>
            <person name="Chain P."/>
            <person name="Malfatti S."/>
            <person name="Shin M."/>
            <person name="Vergez L."/>
            <person name="Schmutz J."/>
            <person name="Larimer F."/>
            <person name="Land M."/>
            <person name="Hauser L."/>
            <person name="Pelletier D.A."/>
            <person name="Kyrpides N."/>
            <person name="Kim E."/>
            <person name="Harwood C.S."/>
            <person name="Oda Y."/>
            <person name="Richardson P."/>
        </authorList>
    </citation>
    <scope>NUCLEOTIDE SEQUENCE [LARGE SCALE GENOMIC DNA]</scope>
    <source>
        <strain>BisA53</strain>
    </source>
</reference>
<accession>Q07T77</accession>
<dbReference type="EC" id="2.4.1.-" evidence="1"/>
<dbReference type="EMBL" id="CP000463">
    <property type="protein sequence ID" value="ABJ04857.1"/>
    <property type="molecule type" value="Genomic_DNA"/>
</dbReference>
<dbReference type="STRING" id="316055.RPE_0901"/>
<dbReference type="CAZy" id="GT2">
    <property type="family name" value="Glycosyltransferase Family 2"/>
</dbReference>
<dbReference type="KEGG" id="rpe:RPE_0901"/>
<dbReference type="eggNOG" id="COG2943">
    <property type="taxonomic scope" value="Bacteria"/>
</dbReference>
<dbReference type="HOGENOM" id="CLU_015730_1_0_5"/>
<dbReference type="OrthoDB" id="9775281at2"/>
<dbReference type="UniPathway" id="UPA00637"/>
<dbReference type="GO" id="GO:0005886">
    <property type="term" value="C:plasma membrane"/>
    <property type="evidence" value="ECO:0007669"/>
    <property type="project" value="UniProtKB-SubCell"/>
</dbReference>
<dbReference type="GO" id="GO:0016758">
    <property type="term" value="F:hexosyltransferase activity"/>
    <property type="evidence" value="ECO:0007669"/>
    <property type="project" value="UniProtKB-UniRule"/>
</dbReference>
<dbReference type="GO" id="GO:0009250">
    <property type="term" value="P:glucan biosynthetic process"/>
    <property type="evidence" value="ECO:0007669"/>
    <property type="project" value="UniProtKB-UniRule"/>
</dbReference>
<dbReference type="CDD" id="cd04191">
    <property type="entry name" value="Glucan_BSP_MdoH"/>
    <property type="match status" value="1"/>
</dbReference>
<dbReference type="Gene3D" id="3.90.550.10">
    <property type="entry name" value="Spore Coat Polysaccharide Biosynthesis Protein SpsA, Chain A"/>
    <property type="match status" value="1"/>
</dbReference>
<dbReference type="HAMAP" id="MF_01072">
    <property type="entry name" value="MdoH_OpgH"/>
    <property type="match status" value="1"/>
</dbReference>
<dbReference type="InterPro" id="IPR023725">
    <property type="entry name" value="Glucans_biosynth_gluTrFase_H"/>
</dbReference>
<dbReference type="InterPro" id="IPR001173">
    <property type="entry name" value="Glyco_trans_2-like"/>
</dbReference>
<dbReference type="InterPro" id="IPR050321">
    <property type="entry name" value="Glycosyltr_2/OpgH_subfam"/>
</dbReference>
<dbReference type="InterPro" id="IPR029044">
    <property type="entry name" value="Nucleotide-diphossugar_trans"/>
</dbReference>
<dbReference type="NCBIfam" id="NF003956">
    <property type="entry name" value="PRK05454.1-3"/>
    <property type="match status" value="1"/>
</dbReference>
<dbReference type="NCBIfam" id="NF003958">
    <property type="entry name" value="PRK05454.2-1"/>
    <property type="match status" value="1"/>
</dbReference>
<dbReference type="NCBIfam" id="NF003962">
    <property type="entry name" value="PRK05454.2-5"/>
    <property type="match status" value="1"/>
</dbReference>
<dbReference type="PANTHER" id="PTHR43867">
    <property type="entry name" value="CELLULOSE SYNTHASE CATALYTIC SUBUNIT A [UDP-FORMING]"/>
    <property type="match status" value="1"/>
</dbReference>
<dbReference type="PANTHER" id="PTHR43867:SF5">
    <property type="entry name" value="GLUCANS BIOSYNTHESIS GLUCOSYLTRANSFERASE H"/>
    <property type="match status" value="1"/>
</dbReference>
<dbReference type="Pfam" id="PF13632">
    <property type="entry name" value="Glyco_trans_2_3"/>
    <property type="match status" value="1"/>
</dbReference>
<dbReference type="SUPFAM" id="SSF53448">
    <property type="entry name" value="Nucleotide-diphospho-sugar transferases"/>
    <property type="match status" value="1"/>
</dbReference>
<name>OPGH_RHOP5</name>
<comment type="function">
    <text evidence="1">Involved in the biosynthesis of osmoregulated periplasmic glucans (OPGs).</text>
</comment>
<comment type="pathway">
    <text evidence="1">Glycan metabolism; osmoregulated periplasmic glucan (OPG) biosynthesis.</text>
</comment>
<comment type="subcellular location">
    <subcellularLocation>
        <location evidence="1">Cell inner membrane</location>
        <topology evidence="1">Multi-pass membrane protein</topology>
    </subcellularLocation>
</comment>
<comment type="similarity">
    <text evidence="1">Belongs to the glycosyltransferase 2 family. OpgH subfamily.</text>
</comment>
<sequence length="712" mass="77615">MDALIRAGSEIDAHDTALRGPLPPEAPLAMPEQSFAAAPDREADRAAAAAPNEWRRLAIMLATAALTCAGGYEMYQVLQVGGVTILEGIVLALFAALFAWVALSFVSALAGFVALLSGWHDDLGVAADGPLPAISNRIAMLLPIYNEQPQAVFARLQATRESVELTGHGAQFDWFILSDTTDPAVWIAEEKCYLALASSGERLFYRHRQFNHARKSGNIEDWVKRFGAGYDCIVILDADSMMTGEALVRLAAAMQRHPDVGLIQTLPIVVKARTLFARLQQFAGRMYGPMIASGIAWWHGSESNYWGHNAIIRVAAFAACTGLPSLPGRKPFGGHILSHDFVEAALLRRAGWRIHMAPTLPGSYEECPPSLLDFAARDRRWCQGNLQHAKLLKARGLHWVSRLHFLTGIGSYITAPMWLAFLVAGILISLQAQFVRPEYFPKGYSLFPDWPAQDPVRAAWVFAGTMGLLMMPKLLALILVVIRRESRRGFGGAARAAAGVVTETLISSLTAPVMMIFQSTAIAEILLGRDAGWNVQHRGDGAIPLREIARRYAAPSWLGAVMAVSALLVSWPLLLWMMPVILGLVLAIPVALLTSRTLAKHRAGAMLATPEDAEPPILSRAGEIAATLRDASPAEDPLLQLRNDPVLRELHFAGLAHQPARPRGRVDPALALARAQIDDAACIAEVVDWLDPREKHAVMGSRDTLQRIMRMP</sequence>
<gene>
    <name evidence="1" type="primary">opgH</name>
    <name type="ordered locus">RPE_0901</name>
</gene>
<protein>
    <recommendedName>
        <fullName evidence="1">Glucans biosynthesis glucosyltransferase H</fullName>
        <ecNumber evidence="1">2.4.1.-</ecNumber>
    </recommendedName>
</protein>
<evidence type="ECO:0000255" key="1">
    <source>
        <dbReference type="HAMAP-Rule" id="MF_01072"/>
    </source>
</evidence>